<comment type="function">
    <text evidence="1">Component of the tagatose-1,6-bisphosphate aldolase GatYZ that is required for full activity and stability of the Y subunit. Could have a chaperone-like function for the proper and stable folding of GatY. When expressed alone, GatZ does not show any aldolase activity. Is involved in the catabolism of galactitol.</text>
</comment>
<comment type="pathway">
    <text evidence="1">Carbohydrate metabolism; D-tagatose 6-phosphate degradation; D-glyceraldehyde 3-phosphate and glycerone phosphate from D-tagatose 6-phosphate: step 2/2.</text>
</comment>
<comment type="subunit">
    <text evidence="1">Forms a complex with GatY.</text>
</comment>
<comment type="similarity">
    <text evidence="1">Belongs to the GatZ/KbaZ family. GatZ subfamily.</text>
</comment>
<reference key="1">
    <citation type="journal article" date="2007" name="J. Bacteriol.">
        <title>The genome sequence of avian pathogenic Escherichia coli strain O1:K1:H7 shares strong similarities with human extraintestinal pathogenic E. coli genomes.</title>
        <authorList>
            <person name="Johnson T.J."/>
            <person name="Kariyawasam S."/>
            <person name="Wannemuehler Y."/>
            <person name="Mangiamele P."/>
            <person name="Johnson S.J."/>
            <person name="Doetkott C."/>
            <person name="Skyberg J.A."/>
            <person name="Lynne A.M."/>
            <person name="Johnson J.R."/>
            <person name="Nolan L.K."/>
        </authorList>
    </citation>
    <scope>NUCLEOTIDE SEQUENCE [LARGE SCALE GENOMIC DNA]</scope>
</reference>
<gene>
    <name evidence="1" type="primary">gatZ</name>
    <name type="ordered locus">Ecok1_20070</name>
    <name type="ORF">APECO1_4450</name>
</gene>
<organism>
    <name type="scientific">Escherichia coli O1:K1 / APEC</name>
    <dbReference type="NCBI Taxonomy" id="405955"/>
    <lineage>
        <taxon>Bacteria</taxon>
        <taxon>Pseudomonadati</taxon>
        <taxon>Pseudomonadota</taxon>
        <taxon>Gammaproteobacteria</taxon>
        <taxon>Enterobacterales</taxon>
        <taxon>Enterobacteriaceae</taxon>
        <taxon>Escherichia</taxon>
    </lineage>
</organism>
<sequence length="420" mass="46940">MKTLIARHKAGEHIGICSVCSAHPLVIEAALAFDRNSTRKVLIEATSNQVNQFGGYTGMTPADFREFVFAIADKVGFARERIILGGDHLGPNCWQQENADAAMEKSVELVKAYVRAGFSKIHLDASMSCADDSIPLAPETVAERAAVLCLAAESVATDCQREQLNYVIGTEVPVPGGEASAIQSVHITQVEDAANTLRTHQKAFIARGLAEALTRVIAIVVQPGVEFDHSNIIHYQAQEAQALAQWIEKTKMVYEAHSTDYQTQTAYRELVRDHFAILKVGPALTFALREAIFALAQIEQELIAPENRSRCLAVIEEVMLDEPQYWKKYYRTGFNDSLLGIRYSLSDRIRYYWPHSRIKNSVETMMVNLEGVDIPLGMISQYLPKQFERIQSGELSAIPHQLIMDKIYDVLRAYRYGCAE</sequence>
<keyword id="KW-0298">Galactitol metabolism</keyword>
<keyword id="KW-1185">Reference proteome</keyword>
<feature type="chain" id="PRO_0000372499" description="D-tagatose-1,6-bisphosphate aldolase subunit GatZ">
    <location>
        <begin position="1"/>
        <end position="420"/>
    </location>
</feature>
<protein>
    <recommendedName>
        <fullName evidence="1">D-tagatose-1,6-bisphosphate aldolase subunit GatZ</fullName>
    </recommendedName>
</protein>
<dbReference type="EMBL" id="CP000468">
    <property type="protein sequence ID" value="ABJ01501.1"/>
    <property type="molecule type" value="Genomic_DNA"/>
</dbReference>
<dbReference type="RefSeq" id="WP_000853836.1">
    <property type="nucleotide sequence ID" value="NZ_CADILS010000067.1"/>
</dbReference>
<dbReference type="SMR" id="A1ACW1"/>
<dbReference type="KEGG" id="ecv:APECO1_4450"/>
<dbReference type="HOGENOM" id="CLU_053334_0_0_6"/>
<dbReference type="UniPathway" id="UPA00704">
    <property type="reaction ID" value="UER00716"/>
</dbReference>
<dbReference type="Proteomes" id="UP000008216">
    <property type="component" value="Chromosome"/>
</dbReference>
<dbReference type="GO" id="GO:0005886">
    <property type="term" value="C:plasma membrane"/>
    <property type="evidence" value="ECO:0007669"/>
    <property type="project" value="TreeGrafter"/>
</dbReference>
<dbReference type="GO" id="GO:2001059">
    <property type="term" value="P:D-tagatose 6-phosphate catabolic process"/>
    <property type="evidence" value="ECO:0007669"/>
    <property type="project" value="UniProtKB-UniRule"/>
</dbReference>
<dbReference type="GO" id="GO:0019402">
    <property type="term" value="P:galactitol metabolic process"/>
    <property type="evidence" value="ECO:0007669"/>
    <property type="project" value="UniProtKB-KW"/>
</dbReference>
<dbReference type="GO" id="GO:0009401">
    <property type="term" value="P:phosphoenolpyruvate-dependent sugar phosphotransferase system"/>
    <property type="evidence" value="ECO:0007669"/>
    <property type="project" value="TreeGrafter"/>
</dbReference>
<dbReference type="FunFam" id="3.20.20.70:FF:000141">
    <property type="entry name" value="D-tagatose-1,6-bisphosphate aldolase subunit GatZ"/>
    <property type="match status" value="1"/>
</dbReference>
<dbReference type="Gene3D" id="3.20.20.70">
    <property type="entry name" value="Aldolase class I"/>
    <property type="match status" value="1"/>
</dbReference>
<dbReference type="Gene3D" id="1.10.400.20">
    <property type="entry name" value="putative tagatose 6-phosphate kinase domain like"/>
    <property type="match status" value="1"/>
</dbReference>
<dbReference type="HAMAP" id="MF_01296">
    <property type="entry name" value="Tagatose_aldol_GatZ"/>
    <property type="match status" value="1"/>
</dbReference>
<dbReference type="InterPro" id="IPR013785">
    <property type="entry name" value="Aldolase_TIM"/>
</dbReference>
<dbReference type="InterPro" id="IPR012062">
    <property type="entry name" value="GatZ/KbaZ-like"/>
</dbReference>
<dbReference type="InterPro" id="IPR050303">
    <property type="entry name" value="GatZ_KbaZ_carbometab"/>
</dbReference>
<dbReference type="InterPro" id="IPR023436">
    <property type="entry name" value="TagBP_ald_GatZ"/>
</dbReference>
<dbReference type="NCBIfam" id="TIGR02810">
    <property type="entry name" value="agaZ_gatZ"/>
    <property type="match status" value="1"/>
</dbReference>
<dbReference type="NCBIfam" id="NF011626">
    <property type="entry name" value="PRK15052.1"/>
    <property type="match status" value="1"/>
</dbReference>
<dbReference type="PANTHER" id="PTHR32502:SF12">
    <property type="entry name" value="D-TAGATOSE-1,6-BISPHOSPHATE ALDOLASE SUBUNIT GATZ"/>
    <property type="match status" value="1"/>
</dbReference>
<dbReference type="PANTHER" id="PTHR32502">
    <property type="entry name" value="N-ACETYLGALACTOSAMINE PERMEASE II COMPONENT-RELATED"/>
    <property type="match status" value="1"/>
</dbReference>
<dbReference type="Pfam" id="PF08013">
    <property type="entry name" value="GatZ_KbaZ-like"/>
    <property type="match status" value="1"/>
</dbReference>
<dbReference type="PIRSF" id="PIRSF009264">
    <property type="entry name" value="TagBP_ald_AgaZ"/>
    <property type="match status" value="1"/>
</dbReference>
<dbReference type="SUPFAM" id="SSF51569">
    <property type="entry name" value="Aldolase"/>
    <property type="match status" value="1"/>
</dbReference>
<accession>A1ACW1</accession>
<name>GATZ_ECOK1</name>
<evidence type="ECO:0000255" key="1">
    <source>
        <dbReference type="HAMAP-Rule" id="MF_01296"/>
    </source>
</evidence>
<proteinExistence type="inferred from homology"/>